<proteinExistence type="inferred from homology"/>
<sequence length="260" mass="27606">MTSLKLLKKKAPLVICITNDVVKNFTANGLVALGASPAMSEFPADLEDLLKYAGGLLINIGTLTDENWKLYQAALKIAEKYNVPAVLDPVACGAGEYRKKVADDLINNYKLAAIRGNAGEIASLVGIDVASKGVDSAGVDNIDEIALAANEKFNIPIVVTGEVDAIAVNGEVVTIHNGSAMMPKVIGTGCLLGAVVASFIGLEKGQELKSLETAMLVYNIAGEMAEKRPNGHLPGTFKVEFINALYEITDEDVKEFKRVK</sequence>
<gene>
    <name evidence="1" type="primary">thiM1</name>
    <name type="ordered locus">SPG_0650</name>
</gene>
<reference key="1">
    <citation type="journal article" date="2001" name="Microb. Drug Resist.">
        <title>Annotated draft genomic sequence from a Streptococcus pneumoniae type 19F clinical isolate.</title>
        <authorList>
            <person name="Dopazo J."/>
            <person name="Mendoza A."/>
            <person name="Herrero J."/>
            <person name="Caldara F."/>
            <person name="Humbert Y."/>
            <person name="Friedli L."/>
            <person name="Guerrier M."/>
            <person name="Grand-Schenk E."/>
            <person name="Gandin C."/>
            <person name="de Francesco M."/>
            <person name="Polissi A."/>
            <person name="Buell G."/>
            <person name="Feger G."/>
            <person name="Garcia E."/>
            <person name="Peitsch M."/>
            <person name="Garcia-Bustos J.F."/>
        </authorList>
    </citation>
    <scope>NUCLEOTIDE SEQUENCE [LARGE SCALE GENOMIC DNA]</scope>
    <source>
        <strain>G54</strain>
    </source>
</reference>
<reference key="2">
    <citation type="submission" date="2008-03" db="EMBL/GenBank/DDBJ databases">
        <title>Pneumococcal beta glucoside metabolism investigated by whole genome comparison.</title>
        <authorList>
            <person name="Mulas L."/>
            <person name="Trappetti C."/>
            <person name="Hakenbeck R."/>
            <person name="Iannelli F."/>
            <person name="Pozzi G."/>
            <person name="Davidsen T.M."/>
            <person name="Tettelin H."/>
            <person name="Oggioni M."/>
        </authorList>
    </citation>
    <scope>NUCLEOTIDE SEQUENCE [LARGE SCALE GENOMIC DNA]</scope>
    <source>
        <strain>G54</strain>
    </source>
</reference>
<organism>
    <name type="scientific">Streptococcus pneumoniae serotype 19F (strain G54)</name>
    <dbReference type="NCBI Taxonomy" id="512566"/>
    <lineage>
        <taxon>Bacteria</taxon>
        <taxon>Bacillati</taxon>
        <taxon>Bacillota</taxon>
        <taxon>Bacilli</taxon>
        <taxon>Lactobacillales</taxon>
        <taxon>Streptococcaceae</taxon>
        <taxon>Streptococcus</taxon>
    </lineage>
</organism>
<dbReference type="EC" id="2.7.1.50" evidence="1"/>
<dbReference type="EMBL" id="CP001015">
    <property type="protein sequence ID" value="ACF54849.1"/>
    <property type="molecule type" value="Genomic_DNA"/>
</dbReference>
<dbReference type="SMR" id="B5E320"/>
<dbReference type="KEGG" id="spx:SPG_0650"/>
<dbReference type="HOGENOM" id="CLU_019943_0_2_9"/>
<dbReference type="UniPathway" id="UPA00060">
    <property type="reaction ID" value="UER00139"/>
</dbReference>
<dbReference type="GO" id="GO:0005524">
    <property type="term" value="F:ATP binding"/>
    <property type="evidence" value="ECO:0007669"/>
    <property type="project" value="UniProtKB-UniRule"/>
</dbReference>
<dbReference type="GO" id="GO:0004417">
    <property type="term" value="F:hydroxyethylthiazole kinase activity"/>
    <property type="evidence" value="ECO:0007669"/>
    <property type="project" value="UniProtKB-UniRule"/>
</dbReference>
<dbReference type="GO" id="GO:0000287">
    <property type="term" value="F:magnesium ion binding"/>
    <property type="evidence" value="ECO:0007669"/>
    <property type="project" value="UniProtKB-UniRule"/>
</dbReference>
<dbReference type="GO" id="GO:0009228">
    <property type="term" value="P:thiamine biosynthetic process"/>
    <property type="evidence" value="ECO:0007669"/>
    <property type="project" value="UniProtKB-KW"/>
</dbReference>
<dbReference type="GO" id="GO:0009229">
    <property type="term" value="P:thiamine diphosphate biosynthetic process"/>
    <property type="evidence" value="ECO:0007669"/>
    <property type="project" value="UniProtKB-UniRule"/>
</dbReference>
<dbReference type="CDD" id="cd01170">
    <property type="entry name" value="THZ_kinase"/>
    <property type="match status" value="1"/>
</dbReference>
<dbReference type="Gene3D" id="3.40.1190.20">
    <property type="match status" value="1"/>
</dbReference>
<dbReference type="HAMAP" id="MF_00228">
    <property type="entry name" value="Thz_kinase"/>
    <property type="match status" value="1"/>
</dbReference>
<dbReference type="InterPro" id="IPR000417">
    <property type="entry name" value="Hyethyz_kinase"/>
</dbReference>
<dbReference type="InterPro" id="IPR029056">
    <property type="entry name" value="Ribokinase-like"/>
</dbReference>
<dbReference type="NCBIfam" id="NF006830">
    <property type="entry name" value="PRK09355.1"/>
    <property type="match status" value="1"/>
</dbReference>
<dbReference type="NCBIfam" id="TIGR00694">
    <property type="entry name" value="thiM"/>
    <property type="match status" value="1"/>
</dbReference>
<dbReference type="Pfam" id="PF02110">
    <property type="entry name" value="HK"/>
    <property type="match status" value="1"/>
</dbReference>
<dbReference type="PIRSF" id="PIRSF000513">
    <property type="entry name" value="Thz_kinase"/>
    <property type="match status" value="1"/>
</dbReference>
<dbReference type="PRINTS" id="PR01099">
    <property type="entry name" value="HYETHTZKNASE"/>
</dbReference>
<dbReference type="SUPFAM" id="SSF53613">
    <property type="entry name" value="Ribokinase-like"/>
    <property type="match status" value="1"/>
</dbReference>
<feature type="chain" id="PRO_1000100427" description="Hydroxyethylthiazole kinase 1">
    <location>
        <begin position="1"/>
        <end position="260"/>
    </location>
</feature>
<feature type="binding site" evidence="1">
    <location>
        <position position="39"/>
    </location>
    <ligand>
        <name>substrate</name>
    </ligand>
</feature>
<feature type="binding site" evidence="1">
    <location>
        <position position="115"/>
    </location>
    <ligand>
        <name>ATP</name>
        <dbReference type="ChEBI" id="CHEBI:30616"/>
    </ligand>
</feature>
<feature type="binding site" evidence="1">
    <location>
        <position position="160"/>
    </location>
    <ligand>
        <name>ATP</name>
        <dbReference type="ChEBI" id="CHEBI:30616"/>
    </ligand>
</feature>
<feature type="binding site" evidence="1">
    <location>
        <position position="187"/>
    </location>
    <ligand>
        <name>substrate</name>
    </ligand>
</feature>
<name>THIM1_STRP4</name>
<protein>
    <recommendedName>
        <fullName evidence="1">Hydroxyethylthiazole kinase 1</fullName>
        <ecNumber evidence="1">2.7.1.50</ecNumber>
    </recommendedName>
    <alternativeName>
        <fullName evidence="1">4-methyl-5-beta-hydroxyethylthiazole kinase 1</fullName>
        <shortName evidence="1">TH kinase 1</shortName>
        <shortName evidence="1">Thz kinase 1</shortName>
    </alternativeName>
</protein>
<evidence type="ECO:0000255" key="1">
    <source>
        <dbReference type="HAMAP-Rule" id="MF_00228"/>
    </source>
</evidence>
<accession>B5E320</accession>
<keyword id="KW-0067">ATP-binding</keyword>
<keyword id="KW-0418">Kinase</keyword>
<keyword id="KW-0460">Magnesium</keyword>
<keyword id="KW-0479">Metal-binding</keyword>
<keyword id="KW-0547">Nucleotide-binding</keyword>
<keyword id="KW-0784">Thiamine biosynthesis</keyword>
<keyword id="KW-0808">Transferase</keyword>
<comment type="function">
    <text evidence="1">Catalyzes the phosphorylation of the hydroxyl group of 4-methyl-5-beta-hydroxyethylthiazole (THZ).</text>
</comment>
<comment type="catalytic activity">
    <reaction evidence="1">
        <text>5-(2-hydroxyethyl)-4-methylthiazole + ATP = 4-methyl-5-(2-phosphooxyethyl)-thiazole + ADP + H(+)</text>
        <dbReference type="Rhea" id="RHEA:24212"/>
        <dbReference type="ChEBI" id="CHEBI:15378"/>
        <dbReference type="ChEBI" id="CHEBI:17957"/>
        <dbReference type="ChEBI" id="CHEBI:30616"/>
        <dbReference type="ChEBI" id="CHEBI:58296"/>
        <dbReference type="ChEBI" id="CHEBI:456216"/>
        <dbReference type="EC" id="2.7.1.50"/>
    </reaction>
</comment>
<comment type="cofactor">
    <cofactor evidence="1">
        <name>Mg(2+)</name>
        <dbReference type="ChEBI" id="CHEBI:18420"/>
    </cofactor>
</comment>
<comment type="pathway">
    <text evidence="1">Cofactor biosynthesis; thiamine diphosphate biosynthesis; 4-methyl-5-(2-phosphoethyl)-thiazole from 5-(2-hydroxyethyl)-4-methylthiazole: step 1/1.</text>
</comment>
<comment type="similarity">
    <text evidence="1">Belongs to the Thz kinase family.</text>
</comment>